<accession>C0MCD8</accession>
<dbReference type="EMBL" id="FM204884">
    <property type="protein sequence ID" value="CAW98467.1"/>
    <property type="molecule type" value="Genomic_DNA"/>
</dbReference>
<dbReference type="SMR" id="C0MCD8"/>
<dbReference type="KEGG" id="seq:SZO_05070"/>
<dbReference type="PATRIC" id="fig|40041.11.peg.541"/>
<dbReference type="eggNOG" id="COG1159">
    <property type="taxonomic scope" value="Bacteria"/>
</dbReference>
<dbReference type="HOGENOM" id="CLU_038009_1_0_9"/>
<dbReference type="Proteomes" id="UP000001368">
    <property type="component" value="Chromosome"/>
</dbReference>
<dbReference type="GO" id="GO:0005829">
    <property type="term" value="C:cytosol"/>
    <property type="evidence" value="ECO:0007669"/>
    <property type="project" value="TreeGrafter"/>
</dbReference>
<dbReference type="GO" id="GO:0005886">
    <property type="term" value="C:plasma membrane"/>
    <property type="evidence" value="ECO:0007669"/>
    <property type="project" value="UniProtKB-SubCell"/>
</dbReference>
<dbReference type="GO" id="GO:0005525">
    <property type="term" value="F:GTP binding"/>
    <property type="evidence" value="ECO:0007669"/>
    <property type="project" value="UniProtKB-UniRule"/>
</dbReference>
<dbReference type="GO" id="GO:0003924">
    <property type="term" value="F:GTPase activity"/>
    <property type="evidence" value="ECO:0007669"/>
    <property type="project" value="UniProtKB-UniRule"/>
</dbReference>
<dbReference type="GO" id="GO:0043024">
    <property type="term" value="F:ribosomal small subunit binding"/>
    <property type="evidence" value="ECO:0007669"/>
    <property type="project" value="TreeGrafter"/>
</dbReference>
<dbReference type="GO" id="GO:0070181">
    <property type="term" value="F:small ribosomal subunit rRNA binding"/>
    <property type="evidence" value="ECO:0007669"/>
    <property type="project" value="UniProtKB-UniRule"/>
</dbReference>
<dbReference type="GO" id="GO:0000028">
    <property type="term" value="P:ribosomal small subunit assembly"/>
    <property type="evidence" value="ECO:0007669"/>
    <property type="project" value="TreeGrafter"/>
</dbReference>
<dbReference type="CDD" id="cd04163">
    <property type="entry name" value="Era"/>
    <property type="match status" value="1"/>
</dbReference>
<dbReference type="CDD" id="cd22534">
    <property type="entry name" value="KH-II_Era"/>
    <property type="match status" value="1"/>
</dbReference>
<dbReference type="FunFam" id="3.30.300.20:FF:000003">
    <property type="entry name" value="GTPase Era"/>
    <property type="match status" value="1"/>
</dbReference>
<dbReference type="FunFam" id="3.40.50.300:FF:000094">
    <property type="entry name" value="GTPase Era"/>
    <property type="match status" value="1"/>
</dbReference>
<dbReference type="Gene3D" id="3.30.300.20">
    <property type="match status" value="1"/>
</dbReference>
<dbReference type="Gene3D" id="3.40.50.300">
    <property type="entry name" value="P-loop containing nucleotide triphosphate hydrolases"/>
    <property type="match status" value="1"/>
</dbReference>
<dbReference type="HAMAP" id="MF_00367">
    <property type="entry name" value="GTPase_Era"/>
    <property type="match status" value="1"/>
</dbReference>
<dbReference type="InterPro" id="IPR030388">
    <property type="entry name" value="G_ERA_dom"/>
</dbReference>
<dbReference type="InterPro" id="IPR006073">
    <property type="entry name" value="GTP-bd"/>
</dbReference>
<dbReference type="InterPro" id="IPR005662">
    <property type="entry name" value="GTPase_Era-like"/>
</dbReference>
<dbReference type="InterPro" id="IPR015946">
    <property type="entry name" value="KH_dom-like_a/b"/>
</dbReference>
<dbReference type="InterPro" id="IPR004044">
    <property type="entry name" value="KH_dom_type_2"/>
</dbReference>
<dbReference type="InterPro" id="IPR009019">
    <property type="entry name" value="KH_sf_prok-type"/>
</dbReference>
<dbReference type="InterPro" id="IPR027417">
    <property type="entry name" value="P-loop_NTPase"/>
</dbReference>
<dbReference type="InterPro" id="IPR005225">
    <property type="entry name" value="Small_GTP-bd"/>
</dbReference>
<dbReference type="NCBIfam" id="TIGR00436">
    <property type="entry name" value="era"/>
    <property type="match status" value="1"/>
</dbReference>
<dbReference type="NCBIfam" id="NF000908">
    <property type="entry name" value="PRK00089.1"/>
    <property type="match status" value="1"/>
</dbReference>
<dbReference type="NCBIfam" id="TIGR00231">
    <property type="entry name" value="small_GTP"/>
    <property type="match status" value="1"/>
</dbReference>
<dbReference type="PANTHER" id="PTHR42698">
    <property type="entry name" value="GTPASE ERA"/>
    <property type="match status" value="1"/>
</dbReference>
<dbReference type="PANTHER" id="PTHR42698:SF1">
    <property type="entry name" value="GTPASE ERA, MITOCHONDRIAL"/>
    <property type="match status" value="1"/>
</dbReference>
<dbReference type="Pfam" id="PF07650">
    <property type="entry name" value="KH_2"/>
    <property type="match status" value="1"/>
</dbReference>
<dbReference type="Pfam" id="PF01926">
    <property type="entry name" value="MMR_HSR1"/>
    <property type="match status" value="1"/>
</dbReference>
<dbReference type="SUPFAM" id="SSF52540">
    <property type="entry name" value="P-loop containing nucleoside triphosphate hydrolases"/>
    <property type="match status" value="1"/>
</dbReference>
<dbReference type="SUPFAM" id="SSF54814">
    <property type="entry name" value="Prokaryotic type KH domain (KH-domain type II)"/>
    <property type="match status" value="1"/>
</dbReference>
<dbReference type="PROSITE" id="PS51713">
    <property type="entry name" value="G_ERA"/>
    <property type="match status" value="1"/>
</dbReference>
<dbReference type="PROSITE" id="PS50823">
    <property type="entry name" value="KH_TYPE_2"/>
    <property type="match status" value="1"/>
</dbReference>
<organism>
    <name type="scientific">Streptococcus equi subsp. zooepidemicus (strain H70)</name>
    <dbReference type="NCBI Taxonomy" id="553483"/>
    <lineage>
        <taxon>Bacteria</taxon>
        <taxon>Bacillati</taxon>
        <taxon>Bacillota</taxon>
        <taxon>Bacilli</taxon>
        <taxon>Lactobacillales</taxon>
        <taxon>Streptococcaceae</taxon>
        <taxon>Streptococcus</taxon>
    </lineage>
</organism>
<sequence length="298" mass="34144">MFKSGFVAILGRPNVGKSTFLNHVMGQKIAIMSDKAQSTRNKIMGIYTTETEQIVFIDTPGIHKPKTALGDFMVESAYSTLREVETVLFMVPADEKRGKGDDMIIERLKAARIPVILVINKIDKVHPDQLLEQIDDFRSQMDFKEIVPISALQGNNVETLVQLLKDNLEEGFQYFPEDQITDHPERFLVSEMVREKVLHLTQQEVPHSVAVVVDSMKRDEVTDKVHIRVTIMVERDSQKGIIIGKQGAMLKKIGKLARRDIELMLGDKVYLETWVKVKKNWRDKKLDLADFGYNQKEY</sequence>
<protein>
    <recommendedName>
        <fullName evidence="1">GTPase Era</fullName>
    </recommendedName>
</protein>
<keyword id="KW-1003">Cell membrane</keyword>
<keyword id="KW-0963">Cytoplasm</keyword>
<keyword id="KW-0342">GTP-binding</keyword>
<keyword id="KW-0472">Membrane</keyword>
<keyword id="KW-0547">Nucleotide-binding</keyword>
<keyword id="KW-0690">Ribosome biogenesis</keyword>
<keyword id="KW-0694">RNA-binding</keyword>
<keyword id="KW-0699">rRNA-binding</keyword>
<proteinExistence type="inferred from homology"/>
<evidence type="ECO:0000255" key="1">
    <source>
        <dbReference type="HAMAP-Rule" id="MF_00367"/>
    </source>
</evidence>
<evidence type="ECO:0000255" key="2">
    <source>
        <dbReference type="PROSITE-ProRule" id="PRU01050"/>
    </source>
</evidence>
<reference key="1">
    <citation type="journal article" date="2009" name="PLoS Pathog.">
        <title>Genomic evidence for the evolution of Streptococcus equi: host restriction, increased virulence, and genetic exchange with human pathogens.</title>
        <authorList>
            <person name="Holden M.T.G."/>
            <person name="Heather Z."/>
            <person name="Paillot R."/>
            <person name="Steward K.F."/>
            <person name="Webb K."/>
            <person name="Ainslie F."/>
            <person name="Jourdan T."/>
            <person name="Bason N.C."/>
            <person name="Holroyd N.E."/>
            <person name="Mungall K."/>
            <person name="Quail M.A."/>
            <person name="Sanders M."/>
            <person name="Simmonds M."/>
            <person name="Willey D."/>
            <person name="Brooks K."/>
            <person name="Aanensen D.M."/>
            <person name="Spratt B.G."/>
            <person name="Jolley K.A."/>
            <person name="Maiden M.C.J."/>
            <person name="Kehoe M."/>
            <person name="Chanter N."/>
            <person name="Bentley S.D."/>
            <person name="Robinson C."/>
            <person name="Maskell D.J."/>
            <person name="Parkhill J."/>
            <person name="Waller A.S."/>
        </authorList>
    </citation>
    <scope>NUCLEOTIDE SEQUENCE [LARGE SCALE GENOMIC DNA]</scope>
    <source>
        <strain>H70</strain>
    </source>
</reference>
<name>ERA_STRS7</name>
<gene>
    <name evidence="1" type="primary">era</name>
    <name type="ordered locus">SZO_05070</name>
</gene>
<comment type="function">
    <text evidence="1">An essential GTPase that binds both GDP and GTP, with rapid nucleotide exchange. Plays a role in 16S rRNA processing and 30S ribosomal subunit biogenesis and possibly also in cell cycle regulation and energy metabolism.</text>
</comment>
<comment type="subunit">
    <text evidence="1">Monomer.</text>
</comment>
<comment type="subcellular location">
    <subcellularLocation>
        <location>Cytoplasm</location>
    </subcellularLocation>
    <subcellularLocation>
        <location evidence="1">Cell membrane</location>
        <topology evidence="1">Peripheral membrane protein</topology>
    </subcellularLocation>
</comment>
<comment type="similarity">
    <text evidence="1 2">Belongs to the TRAFAC class TrmE-Era-EngA-EngB-Septin-like GTPase superfamily. Era GTPase family.</text>
</comment>
<feature type="chain" id="PRO_1000205549" description="GTPase Era">
    <location>
        <begin position="1"/>
        <end position="298"/>
    </location>
</feature>
<feature type="domain" description="Era-type G" evidence="2">
    <location>
        <begin position="3"/>
        <end position="170"/>
    </location>
</feature>
<feature type="domain" description="KH type-2" evidence="1">
    <location>
        <begin position="201"/>
        <end position="279"/>
    </location>
</feature>
<feature type="region of interest" description="G1" evidence="2">
    <location>
        <begin position="11"/>
        <end position="18"/>
    </location>
</feature>
<feature type="region of interest" description="G2" evidence="2">
    <location>
        <begin position="37"/>
        <end position="41"/>
    </location>
</feature>
<feature type="region of interest" description="G3" evidence="2">
    <location>
        <begin position="58"/>
        <end position="61"/>
    </location>
</feature>
<feature type="region of interest" description="G4" evidence="2">
    <location>
        <begin position="120"/>
        <end position="123"/>
    </location>
</feature>
<feature type="region of interest" description="G5" evidence="2">
    <location>
        <begin position="149"/>
        <end position="151"/>
    </location>
</feature>
<feature type="binding site" evidence="1">
    <location>
        <begin position="11"/>
        <end position="18"/>
    </location>
    <ligand>
        <name>GTP</name>
        <dbReference type="ChEBI" id="CHEBI:37565"/>
    </ligand>
</feature>
<feature type="binding site" evidence="1">
    <location>
        <begin position="58"/>
        <end position="62"/>
    </location>
    <ligand>
        <name>GTP</name>
        <dbReference type="ChEBI" id="CHEBI:37565"/>
    </ligand>
</feature>
<feature type="binding site" evidence="1">
    <location>
        <begin position="120"/>
        <end position="123"/>
    </location>
    <ligand>
        <name>GTP</name>
        <dbReference type="ChEBI" id="CHEBI:37565"/>
    </ligand>
</feature>